<gene>
    <name evidence="2" type="primary">Pde6</name>
    <name type="ORF">GI10668</name>
</gene>
<proteinExistence type="inferred from homology"/>
<accession>B4K9L4</accession>
<protein>
    <recommendedName>
        <fullName evidence="2">cGMP-specific 3',5'-cyclic phosphodiesterase</fullName>
        <ecNumber>3.1.4.35</ecNumber>
    </recommendedName>
</protein>
<reference evidence="6" key="1">
    <citation type="journal article" date="2007" name="Nature">
        <title>Evolution of genes and genomes on the Drosophila phylogeny.</title>
        <authorList>
            <consortium name="Drosophila 12 genomes consortium"/>
        </authorList>
    </citation>
    <scope>NUCLEOTIDE SEQUENCE [LARGE SCALE GENOMIC DNA]</scope>
    <source>
        <strain evidence="6">Tucson 15081-1352.22</strain>
    </source>
</reference>
<name>PDE6_DROMO</name>
<keyword id="KW-1003">Cell membrane</keyword>
<keyword id="KW-0140">cGMP</keyword>
<keyword id="KW-0378">Hydrolase</keyword>
<keyword id="KW-0449">Lipoprotein</keyword>
<keyword id="KW-0472">Membrane</keyword>
<keyword id="KW-0479">Metal-binding</keyword>
<keyword id="KW-0488">Methylation</keyword>
<keyword id="KW-0636">Prenylation</keyword>
<keyword id="KW-1185">Reference proteome</keyword>
<keyword id="KW-0677">Repeat</keyword>
<organism>
    <name type="scientific">Drosophila mojavensis</name>
    <name type="common">Fruit fly</name>
    <dbReference type="NCBI Taxonomy" id="7230"/>
    <lineage>
        <taxon>Eukaryota</taxon>
        <taxon>Metazoa</taxon>
        <taxon>Ecdysozoa</taxon>
        <taxon>Arthropoda</taxon>
        <taxon>Hexapoda</taxon>
        <taxon>Insecta</taxon>
        <taxon>Pterygota</taxon>
        <taxon>Neoptera</taxon>
        <taxon>Endopterygota</taxon>
        <taxon>Diptera</taxon>
        <taxon>Brachycera</taxon>
        <taxon>Muscomorpha</taxon>
        <taxon>Ephydroidea</taxon>
        <taxon>Drosophilidae</taxon>
        <taxon>Drosophila</taxon>
    </lineage>
</organism>
<dbReference type="EC" id="3.1.4.35"/>
<dbReference type="EMBL" id="CH933806">
    <property type="protein sequence ID" value="EDW16674.1"/>
    <property type="molecule type" value="Genomic_DNA"/>
</dbReference>
<dbReference type="RefSeq" id="XP_002001213.2">
    <property type="nucleotide sequence ID" value="XM_002001177.2"/>
</dbReference>
<dbReference type="SMR" id="B4K9L4"/>
<dbReference type="FunCoup" id="B4K9L4">
    <property type="interactions" value="199"/>
</dbReference>
<dbReference type="EnsemblMetazoa" id="FBtr0429027">
    <property type="protein sequence ID" value="FBpp0386515"/>
    <property type="gene ID" value="FBgn0133432"/>
</dbReference>
<dbReference type="EnsemblMetazoa" id="XM_032728524.2">
    <property type="protein sequence ID" value="XP_032584415.1"/>
    <property type="gene ID" value="LOC6575197"/>
</dbReference>
<dbReference type="KEGG" id="dmo:Dmoj_GI10668"/>
<dbReference type="eggNOG" id="KOG3689">
    <property type="taxonomic scope" value="Eukaryota"/>
</dbReference>
<dbReference type="HOGENOM" id="CLU_006980_0_2_1"/>
<dbReference type="InParanoid" id="B4K9L4"/>
<dbReference type="OMA" id="FHIPYEV"/>
<dbReference type="OrthoDB" id="74705at2759"/>
<dbReference type="PhylomeDB" id="B4K9L4"/>
<dbReference type="ChiTaRS" id="Pde6">
    <property type="organism name" value="fly"/>
</dbReference>
<dbReference type="Proteomes" id="UP000009192">
    <property type="component" value="Unassembled WGS sequence"/>
</dbReference>
<dbReference type="GO" id="GO:0016020">
    <property type="term" value="C:membrane"/>
    <property type="evidence" value="ECO:0000250"/>
    <property type="project" value="UniProtKB"/>
</dbReference>
<dbReference type="GO" id="GO:0005886">
    <property type="term" value="C:plasma membrane"/>
    <property type="evidence" value="ECO:0007669"/>
    <property type="project" value="UniProtKB-SubCell"/>
</dbReference>
<dbReference type="GO" id="GO:0047555">
    <property type="term" value="F:3',5'-cyclic-GMP phosphodiesterase activity"/>
    <property type="evidence" value="ECO:0000250"/>
    <property type="project" value="UniProtKB"/>
</dbReference>
<dbReference type="GO" id="GO:0046872">
    <property type="term" value="F:metal ion binding"/>
    <property type="evidence" value="ECO:0007669"/>
    <property type="project" value="UniProtKB-KW"/>
</dbReference>
<dbReference type="GO" id="GO:0046068">
    <property type="term" value="P:cGMP metabolic process"/>
    <property type="evidence" value="ECO:0000250"/>
    <property type="project" value="UniProtKB"/>
</dbReference>
<dbReference type="GO" id="GO:0007165">
    <property type="term" value="P:signal transduction"/>
    <property type="evidence" value="ECO:0007669"/>
    <property type="project" value="InterPro"/>
</dbReference>
<dbReference type="CDD" id="cd00077">
    <property type="entry name" value="HDc"/>
    <property type="match status" value="1"/>
</dbReference>
<dbReference type="FunFam" id="1.10.1300.10:FF:000003">
    <property type="entry name" value="Phosphodiesterase"/>
    <property type="match status" value="1"/>
</dbReference>
<dbReference type="FunFam" id="3.30.450.40:FF:000031">
    <property type="entry name" value="Phosphodiesterase"/>
    <property type="match status" value="1"/>
</dbReference>
<dbReference type="Gene3D" id="3.30.450.40">
    <property type="match status" value="2"/>
</dbReference>
<dbReference type="Gene3D" id="1.10.1300.10">
    <property type="entry name" value="3'5'-cyclic nucleotide phosphodiesterase, catalytic domain"/>
    <property type="match status" value="1"/>
</dbReference>
<dbReference type="InterPro" id="IPR003018">
    <property type="entry name" value="GAF"/>
</dbReference>
<dbReference type="InterPro" id="IPR029016">
    <property type="entry name" value="GAF-like_dom_sf"/>
</dbReference>
<dbReference type="InterPro" id="IPR003607">
    <property type="entry name" value="HD/PDEase_dom"/>
</dbReference>
<dbReference type="InterPro" id="IPR023088">
    <property type="entry name" value="PDEase"/>
</dbReference>
<dbReference type="InterPro" id="IPR002073">
    <property type="entry name" value="PDEase_catalytic_dom"/>
</dbReference>
<dbReference type="InterPro" id="IPR036971">
    <property type="entry name" value="PDEase_catalytic_dom_sf"/>
</dbReference>
<dbReference type="InterPro" id="IPR023174">
    <property type="entry name" value="PDEase_CS"/>
</dbReference>
<dbReference type="PANTHER" id="PTHR11347">
    <property type="entry name" value="CYCLIC NUCLEOTIDE PHOSPHODIESTERASE"/>
    <property type="match status" value="1"/>
</dbReference>
<dbReference type="Pfam" id="PF01590">
    <property type="entry name" value="GAF"/>
    <property type="match status" value="2"/>
</dbReference>
<dbReference type="Pfam" id="PF00233">
    <property type="entry name" value="PDEase_I"/>
    <property type="match status" value="1"/>
</dbReference>
<dbReference type="PRINTS" id="PR00387">
    <property type="entry name" value="PDIESTERASE1"/>
</dbReference>
<dbReference type="SMART" id="SM00065">
    <property type="entry name" value="GAF"/>
    <property type="match status" value="2"/>
</dbReference>
<dbReference type="SMART" id="SM00471">
    <property type="entry name" value="HDc"/>
    <property type="match status" value="1"/>
</dbReference>
<dbReference type="SUPFAM" id="SSF55781">
    <property type="entry name" value="GAF domain-like"/>
    <property type="match status" value="2"/>
</dbReference>
<dbReference type="SUPFAM" id="SSF109604">
    <property type="entry name" value="HD-domain/PDEase-like"/>
    <property type="match status" value="1"/>
</dbReference>
<dbReference type="PROSITE" id="PS00126">
    <property type="entry name" value="PDEASE_I_1"/>
    <property type="match status" value="1"/>
</dbReference>
<dbReference type="PROSITE" id="PS51845">
    <property type="entry name" value="PDEASE_I_2"/>
    <property type="match status" value="1"/>
</dbReference>
<sequence length="1116" mass="124330">MTDVSATTGRAGDRVSSTSSEVAVETTSQALTNGAAKEPLAAVTAEATATATVTATTTATVTATTTAATATMATAVISKQAKSECHSQSNNNQHVETAPSKQSSDSEASAPTTVSIPSANAKINSSSSGKTTATQQDVDEVARLFEEKPEAFEKWLTERAPPEALSRLHEFIESRKPHKRPSVTSDLFQQWMASPTVQQKSPRKLSNSSVHALPESRRHLMELDEGELFMELIRDVANELDIDVLCHKILVNVGLLTHADRGSLFLAKGTPNNRYLVAKLFDVTQTTALKDAVTRARAEEIIIPFGIGIAGMVAQTKQMINIKEAYKDARFNCEIDLKTGYTTNAILCMPICNYEGDIIGVAQIINKTNGCMEFDEHDVEIFRRYLTFCGIGIQNAQLFEMSVQEYRRNQILLNLARSIFEEQNNLECLVTKIMTEARELLKCERCSVFLVDLDCCEESHLEKIIEKPHQLQQQRTPRAIMSGDSFEEKQNMRNRFTVLFELGGENHAANVSRPSINDLSHSTLAQIAQFVATTGQTVNICDVQDWVREHNQIRAESEIDSTQAILCMPIVNAQKTVIGVAQLINKASGLPFTESDASIFEAFAIFCGLGIHNTQMYENACKLMAKQKVALECLSYHATASQDQTEKLAQDVIAEAEAYNLYSFTFTDFDLVDDDTCRAVLRMFMQCNLVSQFHIPYDVLCRWVLSVRKNYRPVKYHNWRHALNVAQTMFAMLKTGKMERFMTDLEILGLLVACLCHDLDHRGTNNAFQTKTESPLAILYTTSTMEHHHFDQCVMILNSEGNNIFQALSPEDYRSVMKTVESAILSTDLAMYFKKRNAFLELVENGEFDWQGEEKKDLLCGMMMTACDVSAIAKPWEVQHRVAKLVADEFFDQGDLEKLQLNTQPVAMMDRERKDELPKMQVGFIDVICLPLYRVLCDTFPWITPLYEGTLENRRNWQDLAEKVEMGLTWIDHDTIDKPVEEFAGCADEEIKDIEFTVTTLNCNQHGGSAGGGEDTHTPEHQRSSSRLSIKKTGALGKVVRSKLSKTLYNSMDGSKPKTSLKLLESHVSEDMDDKSPTSPSQPHSGSVGRMSASSSTSSAGTVDKSKKRSKLCALL</sequence>
<evidence type="ECO:0000250" key="1"/>
<evidence type="ECO:0000250" key="2">
    <source>
        <dbReference type="UniProtKB" id="Q9VFI9"/>
    </source>
</evidence>
<evidence type="ECO:0000255" key="3"/>
<evidence type="ECO:0000255" key="4">
    <source>
        <dbReference type="PROSITE-ProRule" id="PRU01192"/>
    </source>
</evidence>
<evidence type="ECO:0000256" key="5">
    <source>
        <dbReference type="SAM" id="MobiDB-lite"/>
    </source>
</evidence>
<evidence type="ECO:0000312" key="6">
    <source>
        <dbReference type="EMBL" id="EDW16674.1"/>
    </source>
</evidence>
<feature type="chain" id="PRO_0000363690" description="cGMP-specific 3',5'-cyclic phosphodiesterase">
    <location>
        <begin position="1"/>
        <end position="1113"/>
    </location>
</feature>
<feature type="propeptide" id="PRO_0000363691" description="Removed in mature form" evidence="2">
    <location>
        <begin position="1114"/>
        <end position="1116"/>
    </location>
</feature>
<feature type="domain" description="GAF 1" evidence="3">
    <location>
        <begin position="241"/>
        <end position="393"/>
    </location>
</feature>
<feature type="domain" description="GAF 2" evidence="3">
    <location>
        <begin position="425"/>
        <end position="611"/>
    </location>
</feature>
<feature type="domain" description="PDEase" evidence="4">
    <location>
        <begin position="641"/>
        <end position="964"/>
    </location>
</feature>
<feature type="region of interest" description="Disordered" evidence="5">
    <location>
        <begin position="1"/>
        <end position="36"/>
    </location>
</feature>
<feature type="region of interest" description="Disordered" evidence="5">
    <location>
        <begin position="82"/>
        <end position="136"/>
    </location>
</feature>
<feature type="region of interest" description="Disordered" evidence="5">
    <location>
        <begin position="1005"/>
        <end position="1031"/>
    </location>
</feature>
<feature type="region of interest" description="Disordered" evidence="5">
    <location>
        <begin position="1067"/>
        <end position="1116"/>
    </location>
</feature>
<feature type="compositionally biased region" description="Low complexity" evidence="5">
    <location>
        <begin position="15"/>
        <end position="28"/>
    </location>
</feature>
<feature type="compositionally biased region" description="Polar residues" evidence="5">
    <location>
        <begin position="86"/>
        <end position="136"/>
    </location>
</feature>
<feature type="compositionally biased region" description="Basic and acidic residues" evidence="5">
    <location>
        <begin position="1014"/>
        <end position="1023"/>
    </location>
</feature>
<feature type="compositionally biased region" description="Basic and acidic residues" evidence="5">
    <location>
        <begin position="1067"/>
        <end position="1076"/>
    </location>
</feature>
<feature type="compositionally biased region" description="Low complexity" evidence="5">
    <location>
        <begin position="1085"/>
        <end position="1103"/>
    </location>
</feature>
<feature type="compositionally biased region" description="Basic residues" evidence="5">
    <location>
        <begin position="1106"/>
        <end position="1116"/>
    </location>
</feature>
<feature type="active site" description="Proton donor" evidence="1">
    <location>
        <position position="717"/>
    </location>
</feature>
<feature type="binding site" evidence="1">
    <location>
        <position position="721"/>
    </location>
    <ligand>
        <name>a divalent metal cation</name>
        <dbReference type="ChEBI" id="CHEBI:60240"/>
        <label>1</label>
    </ligand>
</feature>
<feature type="binding site" evidence="1">
    <location>
        <position position="757"/>
    </location>
    <ligand>
        <name>a divalent metal cation</name>
        <dbReference type="ChEBI" id="CHEBI:60240"/>
        <label>1</label>
    </ligand>
</feature>
<feature type="binding site" evidence="1">
    <location>
        <position position="758"/>
    </location>
    <ligand>
        <name>a divalent metal cation</name>
        <dbReference type="ChEBI" id="CHEBI:60240"/>
        <label>1</label>
    </ligand>
</feature>
<feature type="binding site" evidence="1">
    <location>
        <position position="758"/>
    </location>
    <ligand>
        <name>a divalent metal cation</name>
        <dbReference type="ChEBI" id="CHEBI:60240"/>
        <label>2</label>
    </ligand>
</feature>
<feature type="binding site" evidence="1">
    <location>
        <position position="868"/>
    </location>
    <ligand>
        <name>a divalent metal cation</name>
        <dbReference type="ChEBI" id="CHEBI:60240"/>
        <label>1</label>
    </ligand>
</feature>
<feature type="modified residue" description="Cysteine methyl ester" evidence="2">
    <location>
        <position position="1113"/>
    </location>
</feature>
<feature type="lipid moiety-binding region" description="S-farnesyl cysteine" evidence="2">
    <location>
        <position position="1113"/>
    </location>
</feature>
<comment type="function">
    <text evidence="2">Has a role regulating cGMP transport in Malpighian tubule principal cells.</text>
</comment>
<comment type="catalytic activity">
    <reaction evidence="2">
        <text>3',5'-cyclic GMP + H2O = GMP + H(+)</text>
        <dbReference type="Rhea" id="RHEA:16957"/>
        <dbReference type="ChEBI" id="CHEBI:15377"/>
        <dbReference type="ChEBI" id="CHEBI:15378"/>
        <dbReference type="ChEBI" id="CHEBI:57746"/>
        <dbReference type="ChEBI" id="CHEBI:58115"/>
        <dbReference type="EC" id="3.1.4.35"/>
    </reaction>
</comment>
<comment type="cofactor">
    <cofactor evidence="1">
        <name>a divalent metal cation</name>
        <dbReference type="ChEBI" id="CHEBI:60240"/>
    </cofactor>
    <text evidence="1">Binds 2 divalent metal cations per subunit. Site 1 may preferentially bind zinc ions, while site 2 has a preference for magnesium and/or manganese ions.</text>
</comment>
<comment type="subunit">
    <text evidence="2">Interacts with PrBP.</text>
</comment>
<comment type="subcellular location">
    <subcellularLocation>
        <location evidence="2">Cell membrane</location>
        <topology evidence="2">Lipid-anchor</topology>
        <orientation evidence="2">Cytoplasmic side</orientation>
    </subcellularLocation>
</comment>
<comment type="similarity">
    <text evidence="3">Belongs to the cyclic nucleotide phosphodiesterase family.</text>
</comment>